<proteinExistence type="inferred from homology"/>
<keyword id="KW-0648">Protein biosynthesis</keyword>
<keyword id="KW-0808">Transferase</keyword>
<accession>B5EJ84</accession>
<feature type="chain" id="PRO_1000203845" description="Methionyl-tRNA formyltransferase">
    <location>
        <begin position="1"/>
        <end position="313"/>
    </location>
</feature>
<feature type="binding site" evidence="1">
    <location>
        <begin position="113"/>
        <end position="116"/>
    </location>
    <ligand>
        <name>(6S)-5,6,7,8-tetrahydrofolate</name>
        <dbReference type="ChEBI" id="CHEBI:57453"/>
    </ligand>
</feature>
<reference key="1">
    <citation type="submission" date="2008-08" db="EMBL/GenBank/DDBJ databases">
        <title>Complete sequence of Acidithiobacillus ferrooxidans ATCC 53993.</title>
        <authorList>
            <person name="Lucas S."/>
            <person name="Copeland A."/>
            <person name="Lapidus A."/>
            <person name="Glavina del Rio T."/>
            <person name="Dalin E."/>
            <person name="Tice H."/>
            <person name="Bruce D."/>
            <person name="Goodwin L."/>
            <person name="Pitluck S."/>
            <person name="Sims D."/>
            <person name="Brettin T."/>
            <person name="Detter J.C."/>
            <person name="Han C."/>
            <person name="Kuske C.R."/>
            <person name="Larimer F."/>
            <person name="Land M."/>
            <person name="Hauser L."/>
            <person name="Kyrpides N."/>
            <person name="Lykidis A."/>
            <person name="Borole A.P."/>
        </authorList>
    </citation>
    <scope>NUCLEOTIDE SEQUENCE [LARGE SCALE GENOMIC DNA]</scope>
    <source>
        <strain>ATCC 53993 / BNL-5-31</strain>
    </source>
</reference>
<evidence type="ECO:0000255" key="1">
    <source>
        <dbReference type="HAMAP-Rule" id="MF_00182"/>
    </source>
</evidence>
<name>FMT_ACIF5</name>
<dbReference type="EC" id="2.1.2.9" evidence="1"/>
<dbReference type="EMBL" id="CP001132">
    <property type="protein sequence ID" value="ACH82283.1"/>
    <property type="molecule type" value="Genomic_DNA"/>
</dbReference>
<dbReference type="RefSeq" id="WP_012535749.1">
    <property type="nucleotide sequence ID" value="NC_011206.1"/>
</dbReference>
<dbReference type="SMR" id="B5EJ84"/>
<dbReference type="GeneID" id="65279421"/>
<dbReference type="KEGG" id="afe:Lferr_0021"/>
<dbReference type="eggNOG" id="COG0223">
    <property type="taxonomic scope" value="Bacteria"/>
</dbReference>
<dbReference type="HOGENOM" id="CLU_033347_1_2_6"/>
<dbReference type="GO" id="GO:0005829">
    <property type="term" value="C:cytosol"/>
    <property type="evidence" value="ECO:0007669"/>
    <property type="project" value="TreeGrafter"/>
</dbReference>
<dbReference type="GO" id="GO:0004479">
    <property type="term" value="F:methionyl-tRNA formyltransferase activity"/>
    <property type="evidence" value="ECO:0007669"/>
    <property type="project" value="UniProtKB-UniRule"/>
</dbReference>
<dbReference type="CDD" id="cd08646">
    <property type="entry name" value="FMT_core_Met-tRNA-FMT_N"/>
    <property type="match status" value="1"/>
</dbReference>
<dbReference type="CDD" id="cd08704">
    <property type="entry name" value="Met_tRNA_FMT_C"/>
    <property type="match status" value="1"/>
</dbReference>
<dbReference type="Gene3D" id="3.10.25.10">
    <property type="entry name" value="Formyl transferase, C-terminal domain"/>
    <property type="match status" value="1"/>
</dbReference>
<dbReference type="Gene3D" id="3.40.50.170">
    <property type="entry name" value="Formyl transferase, N-terminal domain"/>
    <property type="match status" value="1"/>
</dbReference>
<dbReference type="HAMAP" id="MF_00182">
    <property type="entry name" value="Formyl_trans"/>
    <property type="match status" value="1"/>
</dbReference>
<dbReference type="InterPro" id="IPR005794">
    <property type="entry name" value="Fmt"/>
</dbReference>
<dbReference type="InterPro" id="IPR005793">
    <property type="entry name" value="Formyl_trans_C"/>
</dbReference>
<dbReference type="InterPro" id="IPR037022">
    <property type="entry name" value="Formyl_trans_C_sf"/>
</dbReference>
<dbReference type="InterPro" id="IPR002376">
    <property type="entry name" value="Formyl_transf_N"/>
</dbReference>
<dbReference type="InterPro" id="IPR036477">
    <property type="entry name" value="Formyl_transf_N_sf"/>
</dbReference>
<dbReference type="InterPro" id="IPR011034">
    <property type="entry name" value="Formyl_transferase-like_C_sf"/>
</dbReference>
<dbReference type="InterPro" id="IPR044135">
    <property type="entry name" value="Met-tRNA-FMT_C"/>
</dbReference>
<dbReference type="InterPro" id="IPR041711">
    <property type="entry name" value="Met-tRNA-FMT_N"/>
</dbReference>
<dbReference type="NCBIfam" id="TIGR00460">
    <property type="entry name" value="fmt"/>
    <property type="match status" value="1"/>
</dbReference>
<dbReference type="PANTHER" id="PTHR11138">
    <property type="entry name" value="METHIONYL-TRNA FORMYLTRANSFERASE"/>
    <property type="match status" value="1"/>
</dbReference>
<dbReference type="PANTHER" id="PTHR11138:SF5">
    <property type="entry name" value="METHIONYL-TRNA FORMYLTRANSFERASE, MITOCHONDRIAL"/>
    <property type="match status" value="1"/>
</dbReference>
<dbReference type="Pfam" id="PF02911">
    <property type="entry name" value="Formyl_trans_C"/>
    <property type="match status" value="1"/>
</dbReference>
<dbReference type="Pfam" id="PF00551">
    <property type="entry name" value="Formyl_trans_N"/>
    <property type="match status" value="1"/>
</dbReference>
<dbReference type="SUPFAM" id="SSF50486">
    <property type="entry name" value="FMT C-terminal domain-like"/>
    <property type="match status" value="1"/>
</dbReference>
<dbReference type="SUPFAM" id="SSF53328">
    <property type="entry name" value="Formyltransferase"/>
    <property type="match status" value="1"/>
</dbReference>
<protein>
    <recommendedName>
        <fullName evidence="1">Methionyl-tRNA formyltransferase</fullName>
        <ecNumber evidence="1">2.1.2.9</ecNumber>
    </recommendedName>
</protein>
<organism>
    <name type="scientific">Acidithiobacillus ferrooxidans (strain ATCC 53993 / BNL-5-31)</name>
    <name type="common">Leptospirillum ferrooxidans (ATCC 53993)</name>
    <dbReference type="NCBI Taxonomy" id="380394"/>
    <lineage>
        <taxon>Bacteria</taxon>
        <taxon>Pseudomonadati</taxon>
        <taxon>Pseudomonadota</taxon>
        <taxon>Acidithiobacillia</taxon>
        <taxon>Acidithiobacillales</taxon>
        <taxon>Acidithiobacillaceae</taxon>
        <taxon>Acidithiobacillus</taxon>
    </lineage>
</organism>
<gene>
    <name evidence="1" type="primary">fmt</name>
    <name type="ordered locus">Lferr_0021</name>
</gene>
<sequence length="313" mass="33364">MTEKQRIVFAGTPEFARITLAELRQGPEAVVGVFTQPDRPAGRGRTLQASPVKQEALAAGIPVFQPESCKTGEALELLRSLAPDLLIVVAYGQILPQAILALPTRGAINVHASLLPAWRGAAPIARAIAAGDKESGVAIMQMEAGLDSGPVLWEERLPIAADDTAASLHDRLARLGGKALRHVLDDLWAERLKPVPQDPALVTYAHKLKKEEALLDWRLPAATLERLVRAFNPSPVAHTLFRDKGLRVWQARVLGAGGDQAPGSISAVEKDGVVVTCGEDRLQLLAVQPAGKGVLSGSDFARGYRPQVGEVLG</sequence>
<comment type="function">
    <text evidence="1">Attaches a formyl group to the free amino group of methionyl-tRNA(fMet). The formyl group appears to play a dual role in the initiator identity of N-formylmethionyl-tRNA by promoting its recognition by IF2 and preventing the misappropriation of this tRNA by the elongation apparatus.</text>
</comment>
<comment type="catalytic activity">
    <reaction evidence="1">
        <text>L-methionyl-tRNA(fMet) + (6R)-10-formyltetrahydrofolate = N-formyl-L-methionyl-tRNA(fMet) + (6S)-5,6,7,8-tetrahydrofolate + H(+)</text>
        <dbReference type="Rhea" id="RHEA:24380"/>
        <dbReference type="Rhea" id="RHEA-COMP:9952"/>
        <dbReference type="Rhea" id="RHEA-COMP:9953"/>
        <dbReference type="ChEBI" id="CHEBI:15378"/>
        <dbReference type="ChEBI" id="CHEBI:57453"/>
        <dbReference type="ChEBI" id="CHEBI:78530"/>
        <dbReference type="ChEBI" id="CHEBI:78844"/>
        <dbReference type="ChEBI" id="CHEBI:195366"/>
        <dbReference type="EC" id="2.1.2.9"/>
    </reaction>
</comment>
<comment type="similarity">
    <text evidence="1">Belongs to the Fmt family.</text>
</comment>